<protein>
    <recommendedName>
        <fullName evidence="1">Elongation factor Ts</fullName>
        <shortName evidence="1">EF-Ts</shortName>
    </recommendedName>
</protein>
<organism>
    <name type="scientific">Cutibacterium acnes (strain DSM 16379 / KPA171202)</name>
    <name type="common">Propionibacterium acnes</name>
    <dbReference type="NCBI Taxonomy" id="267747"/>
    <lineage>
        <taxon>Bacteria</taxon>
        <taxon>Bacillati</taxon>
        <taxon>Actinomycetota</taxon>
        <taxon>Actinomycetes</taxon>
        <taxon>Propionibacteriales</taxon>
        <taxon>Propionibacteriaceae</taxon>
        <taxon>Cutibacterium</taxon>
    </lineage>
</organism>
<evidence type="ECO:0000255" key="1">
    <source>
        <dbReference type="HAMAP-Rule" id="MF_00050"/>
    </source>
</evidence>
<comment type="function">
    <text evidence="1">Associates with the EF-Tu.GDP complex and induces the exchange of GDP to GTP. It remains bound to the aminoacyl-tRNA.EF-Tu.GTP complex up to the GTP hydrolysis stage on the ribosome.</text>
</comment>
<comment type="subcellular location">
    <subcellularLocation>
        <location evidence="1">Cytoplasm</location>
    </subcellularLocation>
</comment>
<comment type="similarity">
    <text evidence="1">Belongs to the EF-Ts family.</text>
</comment>
<keyword id="KW-0963">Cytoplasm</keyword>
<keyword id="KW-0251">Elongation factor</keyword>
<keyword id="KW-0648">Protein biosynthesis</keyword>
<sequence length="270" mass="28488">MAITAAEVKKLRDATGAGMMDAKKALTEADGDFDKAVDILRVSGAAKAAKRSDREASNGLVAAAGSSLVHIGSETDFVAKNEEFIAAAHEIAEAADKAGADSKDAANAAALADGTTVGDKLGELAAKIGEKIELANAAHFDGNAHVYLHRRSQDLPPQVGVMVEYEGDNIEAVHGVCLQIAAMSPRWLSRDEVPADVVEHERTVAADIAREEGKPEKIIDRIVEGRLGGFFKENCLLDQPAISDDKKTVAQTLEAAGVTLKRFVRFSAGE</sequence>
<proteinExistence type="inferred from homology"/>
<reference key="1">
    <citation type="journal article" date="2004" name="Science">
        <title>The complete genome sequence of Propionibacterium acnes, a commensal of human skin.</title>
        <authorList>
            <person name="Brueggemann H."/>
            <person name="Henne A."/>
            <person name="Hoster F."/>
            <person name="Liesegang H."/>
            <person name="Wiezer A."/>
            <person name="Strittmatter A."/>
            <person name="Hujer S."/>
            <person name="Duerre P."/>
            <person name="Gottschalk G."/>
        </authorList>
    </citation>
    <scope>NUCLEOTIDE SEQUENCE [LARGE SCALE GENOMIC DNA]</scope>
    <source>
        <strain>DSM 16379 / KPA171202</strain>
    </source>
</reference>
<gene>
    <name evidence="1" type="primary">tsf</name>
    <name type="ordered locus">PPA1520</name>
</gene>
<accession>Q6A7J8</accession>
<name>EFTS_CUTAK</name>
<feature type="chain" id="PRO_0000161172" description="Elongation factor Ts">
    <location>
        <begin position="1"/>
        <end position="270"/>
    </location>
</feature>
<feature type="region of interest" description="Involved in Mg(2+) ion dislocation from EF-Tu" evidence="1">
    <location>
        <begin position="75"/>
        <end position="78"/>
    </location>
</feature>
<dbReference type="EMBL" id="AE017283">
    <property type="protein sequence ID" value="AAT83267.1"/>
    <property type="molecule type" value="Genomic_DNA"/>
</dbReference>
<dbReference type="RefSeq" id="WP_002517028.1">
    <property type="nucleotide sequence ID" value="NZ_CP025935.1"/>
</dbReference>
<dbReference type="SMR" id="Q6A7J8"/>
<dbReference type="EnsemblBacteria" id="AAT83267">
    <property type="protein sequence ID" value="AAT83267"/>
    <property type="gene ID" value="PPA1520"/>
</dbReference>
<dbReference type="GeneID" id="92857503"/>
<dbReference type="KEGG" id="pac:PPA1520"/>
<dbReference type="eggNOG" id="COG0264">
    <property type="taxonomic scope" value="Bacteria"/>
</dbReference>
<dbReference type="HOGENOM" id="CLU_047155_0_0_11"/>
<dbReference type="Proteomes" id="UP000000603">
    <property type="component" value="Chromosome"/>
</dbReference>
<dbReference type="GO" id="GO:0005737">
    <property type="term" value="C:cytoplasm"/>
    <property type="evidence" value="ECO:0007669"/>
    <property type="project" value="UniProtKB-SubCell"/>
</dbReference>
<dbReference type="GO" id="GO:0003746">
    <property type="term" value="F:translation elongation factor activity"/>
    <property type="evidence" value="ECO:0007669"/>
    <property type="project" value="UniProtKB-UniRule"/>
</dbReference>
<dbReference type="CDD" id="cd14275">
    <property type="entry name" value="UBA_EF-Ts"/>
    <property type="match status" value="1"/>
</dbReference>
<dbReference type="FunFam" id="1.10.286.20:FF:000001">
    <property type="entry name" value="Elongation factor Ts"/>
    <property type="match status" value="1"/>
</dbReference>
<dbReference type="FunFam" id="1.10.8.10:FF:000001">
    <property type="entry name" value="Elongation factor Ts"/>
    <property type="match status" value="1"/>
</dbReference>
<dbReference type="Gene3D" id="1.10.286.20">
    <property type="match status" value="1"/>
</dbReference>
<dbReference type="Gene3D" id="1.10.8.10">
    <property type="entry name" value="DNA helicase RuvA subunit, C-terminal domain"/>
    <property type="match status" value="1"/>
</dbReference>
<dbReference type="Gene3D" id="3.30.479.20">
    <property type="entry name" value="Elongation factor Ts, dimerisation domain"/>
    <property type="match status" value="2"/>
</dbReference>
<dbReference type="HAMAP" id="MF_00050">
    <property type="entry name" value="EF_Ts"/>
    <property type="match status" value="1"/>
</dbReference>
<dbReference type="InterPro" id="IPR036402">
    <property type="entry name" value="EF-Ts_dimer_sf"/>
</dbReference>
<dbReference type="InterPro" id="IPR001816">
    <property type="entry name" value="Transl_elong_EFTs/EF1B"/>
</dbReference>
<dbReference type="InterPro" id="IPR014039">
    <property type="entry name" value="Transl_elong_EFTs/EF1B_dimer"/>
</dbReference>
<dbReference type="InterPro" id="IPR018101">
    <property type="entry name" value="Transl_elong_Ts_CS"/>
</dbReference>
<dbReference type="InterPro" id="IPR009060">
    <property type="entry name" value="UBA-like_sf"/>
</dbReference>
<dbReference type="NCBIfam" id="TIGR00116">
    <property type="entry name" value="tsf"/>
    <property type="match status" value="1"/>
</dbReference>
<dbReference type="PANTHER" id="PTHR11741">
    <property type="entry name" value="ELONGATION FACTOR TS"/>
    <property type="match status" value="1"/>
</dbReference>
<dbReference type="PANTHER" id="PTHR11741:SF0">
    <property type="entry name" value="ELONGATION FACTOR TS, MITOCHONDRIAL"/>
    <property type="match status" value="1"/>
</dbReference>
<dbReference type="Pfam" id="PF00889">
    <property type="entry name" value="EF_TS"/>
    <property type="match status" value="1"/>
</dbReference>
<dbReference type="SUPFAM" id="SSF54713">
    <property type="entry name" value="Elongation factor Ts (EF-Ts), dimerisation domain"/>
    <property type="match status" value="2"/>
</dbReference>
<dbReference type="SUPFAM" id="SSF46934">
    <property type="entry name" value="UBA-like"/>
    <property type="match status" value="1"/>
</dbReference>
<dbReference type="PROSITE" id="PS01126">
    <property type="entry name" value="EF_TS_1"/>
    <property type="match status" value="1"/>
</dbReference>